<protein>
    <recommendedName>
        <fullName evidence="1">Protein FixB</fullName>
    </recommendedName>
</protein>
<feature type="chain" id="PRO_1000136333" description="Protein FixB">
    <location>
        <begin position="1"/>
        <end position="313"/>
    </location>
</feature>
<feature type="binding site" evidence="1">
    <location>
        <begin position="255"/>
        <end position="283"/>
    </location>
    <ligand>
        <name>FAD</name>
        <dbReference type="ChEBI" id="CHEBI:57692"/>
    </ligand>
</feature>
<sequence length="313" mass="33541">MNTFSQVWVFSDTPSRLPELMNGAQALANQINTFVLNDADGVQAIQLGANHVWKLNGKPDDRMIEDYAGVMADTIRQHGADGLVLLPNTRRGKLLAAKLGYRLKAAVSNDASTVSVQDGKATVKHMVYGGLAIGEERIATPYAVLTISSGTFDAAQPDASRTGETHTVEWQAPAVAITRTATQARQSNSVDLDKARLVVSVGRGIGSKENIALAEQLCKAIGAELACSRPVAENEKWMEHERYVGISNLMLKPELYLAVGISGQIQHMVGANASQTIFAINKDKNAPIFQYADYGIVGDAVKILPALTAALAR</sequence>
<name>FIXB_ECOSE</name>
<reference key="1">
    <citation type="journal article" date="2008" name="DNA Res.">
        <title>Complete genome sequence and comparative analysis of the wild-type commensal Escherichia coli strain SE11 isolated from a healthy adult.</title>
        <authorList>
            <person name="Oshima K."/>
            <person name="Toh H."/>
            <person name="Ogura Y."/>
            <person name="Sasamoto H."/>
            <person name="Morita H."/>
            <person name="Park S.-H."/>
            <person name="Ooka T."/>
            <person name="Iyoda S."/>
            <person name="Taylor T.D."/>
            <person name="Hayashi T."/>
            <person name="Itoh K."/>
            <person name="Hattori M."/>
        </authorList>
    </citation>
    <scope>NUCLEOTIDE SEQUENCE [LARGE SCALE GENOMIC DNA]</scope>
    <source>
        <strain>SE11</strain>
    </source>
</reference>
<keyword id="KW-0249">Electron transport</keyword>
<keyword id="KW-0274">FAD</keyword>
<keyword id="KW-0285">Flavoprotein</keyword>
<keyword id="KW-0813">Transport</keyword>
<comment type="function">
    <text evidence="1">Required for anaerobic carnitine reduction. May bring reductant to CaiA.</text>
</comment>
<comment type="pathway">
    <text evidence="1">Amine and polyamine metabolism; carnitine metabolism.</text>
</comment>
<comment type="subunit">
    <text evidence="1">Heterodimer of FixA and FixB.</text>
</comment>
<comment type="similarity">
    <text evidence="1">Belongs to the ETF alpha-subunit/FixB family.</text>
</comment>
<dbReference type="EMBL" id="AP009240">
    <property type="protein sequence ID" value="BAG75567.1"/>
    <property type="molecule type" value="Genomic_DNA"/>
</dbReference>
<dbReference type="RefSeq" id="WP_001091528.1">
    <property type="nucleotide sequence ID" value="NC_011415.1"/>
</dbReference>
<dbReference type="SMR" id="B6HYZ3"/>
<dbReference type="KEGG" id="ecy:ECSE_0043"/>
<dbReference type="HOGENOM" id="CLU_034178_0_1_6"/>
<dbReference type="UniPathway" id="UPA00117"/>
<dbReference type="Proteomes" id="UP000008199">
    <property type="component" value="Chromosome"/>
</dbReference>
<dbReference type="GO" id="GO:0009055">
    <property type="term" value="F:electron transfer activity"/>
    <property type="evidence" value="ECO:0007669"/>
    <property type="project" value="InterPro"/>
</dbReference>
<dbReference type="GO" id="GO:0050660">
    <property type="term" value="F:flavin adenine dinucleotide binding"/>
    <property type="evidence" value="ECO:0007669"/>
    <property type="project" value="InterPro"/>
</dbReference>
<dbReference type="GO" id="GO:0009437">
    <property type="term" value="P:carnitine metabolic process"/>
    <property type="evidence" value="ECO:0007669"/>
    <property type="project" value="UniProtKB-UniRule"/>
</dbReference>
<dbReference type="GO" id="GO:0033539">
    <property type="term" value="P:fatty acid beta-oxidation using acyl-CoA dehydrogenase"/>
    <property type="evidence" value="ECO:0007669"/>
    <property type="project" value="TreeGrafter"/>
</dbReference>
<dbReference type="FunFam" id="3.40.50.1220:FF:000004">
    <property type="entry name" value="Electron transfer flavoprotein"/>
    <property type="match status" value="1"/>
</dbReference>
<dbReference type="FunFam" id="3.40.50.620:FF:000067">
    <property type="entry name" value="Protein FixB"/>
    <property type="match status" value="1"/>
</dbReference>
<dbReference type="Gene3D" id="3.40.50.620">
    <property type="entry name" value="HUPs"/>
    <property type="match status" value="1"/>
</dbReference>
<dbReference type="Gene3D" id="3.40.50.1220">
    <property type="entry name" value="TPP-binding domain"/>
    <property type="match status" value="1"/>
</dbReference>
<dbReference type="HAMAP" id="MF_01056">
    <property type="entry name" value="FixB"/>
    <property type="match status" value="1"/>
</dbReference>
<dbReference type="InterPro" id="IPR029035">
    <property type="entry name" value="DHS-like_NAD/FAD-binding_dom"/>
</dbReference>
<dbReference type="InterPro" id="IPR014730">
    <property type="entry name" value="ETF_a/b_N"/>
</dbReference>
<dbReference type="InterPro" id="IPR001308">
    <property type="entry name" value="ETF_a/FixB"/>
</dbReference>
<dbReference type="InterPro" id="IPR014731">
    <property type="entry name" value="ETF_asu_C"/>
</dbReference>
<dbReference type="InterPro" id="IPR018206">
    <property type="entry name" value="ETF_asu_C_CS"/>
</dbReference>
<dbReference type="InterPro" id="IPR023461">
    <property type="entry name" value="FixB"/>
</dbReference>
<dbReference type="InterPro" id="IPR014729">
    <property type="entry name" value="Rossmann-like_a/b/a_fold"/>
</dbReference>
<dbReference type="NCBIfam" id="NF002889">
    <property type="entry name" value="PRK03363.1"/>
    <property type="match status" value="1"/>
</dbReference>
<dbReference type="PANTHER" id="PTHR43153">
    <property type="entry name" value="ELECTRON TRANSFER FLAVOPROTEIN ALPHA"/>
    <property type="match status" value="1"/>
</dbReference>
<dbReference type="PANTHER" id="PTHR43153:SF5">
    <property type="entry name" value="PROTEIN FIXB-RELATED"/>
    <property type="match status" value="1"/>
</dbReference>
<dbReference type="Pfam" id="PF01012">
    <property type="entry name" value="ETF"/>
    <property type="match status" value="1"/>
</dbReference>
<dbReference type="Pfam" id="PF00766">
    <property type="entry name" value="ETF_alpha"/>
    <property type="match status" value="1"/>
</dbReference>
<dbReference type="PIRSF" id="PIRSF000089">
    <property type="entry name" value="Electra_flavoP_a"/>
    <property type="match status" value="1"/>
</dbReference>
<dbReference type="SMART" id="SM00893">
    <property type="entry name" value="ETF"/>
    <property type="match status" value="1"/>
</dbReference>
<dbReference type="SUPFAM" id="SSF52402">
    <property type="entry name" value="Adenine nucleotide alpha hydrolases-like"/>
    <property type="match status" value="1"/>
</dbReference>
<dbReference type="SUPFAM" id="SSF52467">
    <property type="entry name" value="DHS-like NAD/FAD-binding domain"/>
    <property type="match status" value="1"/>
</dbReference>
<dbReference type="PROSITE" id="PS00696">
    <property type="entry name" value="ETF_ALPHA"/>
    <property type="match status" value="1"/>
</dbReference>
<organism>
    <name type="scientific">Escherichia coli (strain SE11)</name>
    <dbReference type="NCBI Taxonomy" id="409438"/>
    <lineage>
        <taxon>Bacteria</taxon>
        <taxon>Pseudomonadati</taxon>
        <taxon>Pseudomonadota</taxon>
        <taxon>Gammaproteobacteria</taxon>
        <taxon>Enterobacterales</taxon>
        <taxon>Enterobacteriaceae</taxon>
        <taxon>Escherichia</taxon>
    </lineage>
</organism>
<gene>
    <name evidence="1" type="primary">fixB</name>
    <name type="ordered locus">ECSE_0043</name>
</gene>
<accession>B6HYZ3</accession>
<evidence type="ECO:0000255" key="1">
    <source>
        <dbReference type="HAMAP-Rule" id="MF_01056"/>
    </source>
</evidence>
<proteinExistence type="inferred from homology"/>